<organism>
    <name type="scientific">Bacillus subtilis (strain 168)</name>
    <dbReference type="NCBI Taxonomy" id="224308"/>
    <lineage>
        <taxon>Bacteria</taxon>
        <taxon>Bacillati</taxon>
        <taxon>Bacillota</taxon>
        <taxon>Bacilli</taxon>
        <taxon>Bacillales</taxon>
        <taxon>Bacillaceae</taxon>
        <taxon>Bacillus</taxon>
    </lineage>
</organism>
<proteinExistence type="inferred from homology"/>
<gene>
    <name evidence="1" type="primary">glmU</name>
    <name type="synonym">gcaD</name>
    <name type="synonym">tms</name>
    <name type="synonym">tms-26</name>
    <name type="ordered locus">BSU00500</name>
</gene>
<comment type="function">
    <text evidence="1">Catalyzes the last two sequential reactions in the de novo biosynthetic pathway for UDP-N-acetylglucosamine (UDP-GlcNAc). The C-terminal domain catalyzes the transfer of acetyl group from acetyl coenzyme A to glucosamine-1-phosphate (GlcN-1-P) to produce N-acetylglucosamine-1-phosphate (GlcNAc-1-P), which is converted into UDP-GlcNAc by the transfer of uridine 5-monophosphate (from uridine 5-triphosphate), a reaction catalyzed by the N-terminal domain.</text>
</comment>
<comment type="catalytic activity">
    <reaction evidence="1">
        <text>alpha-D-glucosamine 1-phosphate + acetyl-CoA = N-acetyl-alpha-D-glucosamine 1-phosphate + CoA + H(+)</text>
        <dbReference type="Rhea" id="RHEA:13725"/>
        <dbReference type="ChEBI" id="CHEBI:15378"/>
        <dbReference type="ChEBI" id="CHEBI:57287"/>
        <dbReference type="ChEBI" id="CHEBI:57288"/>
        <dbReference type="ChEBI" id="CHEBI:57776"/>
        <dbReference type="ChEBI" id="CHEBI:58516"/>
        <dbReference type="EC" id="2.3.1.157"/>
    </reaction>
</comment>
<comment type="catalytic activity">
    <reaction evidence="1">
        <text>N-acetyl-alpha-D-glucosamine 1-phosphate + UTP + H(+) = UDP-N-acetyl-alpha-D-glucosamine + diphosphate</text>
        <dbReference type="Rhea" id="RHEA:13509"/>
        <dbReference type="ChEBI" id="CHEBI:15378"/>
        <dbReference type="ChEBI" id="CHEBI:33019"/>
        <dbReference type="ChEBI" id="CHEBI:46398"/>
        <dbReference type="ChEBI" id="CHEBI:57705"/>
        <dbReference type="ChEBI" id="CHEBI:57776"/>
        <dbReference type="EC" id="2.7.7.23"/>
    </reaction>
</comment>
<comment type="cofactor">
    <cofactor evidence="1">
        <name>Mg(2+)</name>
        <dbReference type="ChEBI" id="CHEBI:18420"/>
    </cofactor>
    <text evidence="1">Binds 1 Mg(2+) ion per subunit.</text>
</comment>
<comment type="pathway">
    <text evidence="1">Nucleotide-sugar biosynthesis; UDP-N-acetyl-alpha-D-glucosamine biosynthesis; N-acetyl-alpha-D-glucosamine 1-phosphate from alpha-D-glucosamine 6-phosphate (route II): step 2/2.</text>
</comment>
<comment type="pathway">
    <text evidence="1">Nucleotide-sugar biosynthesis; UDP-N-acetyl-alpha-D-glucosamine biosynthesis; UDP-N-acetyl-alpha-D-glucosamine from N-acetyl-alpha-D-glucosamine 1-phosphate: step 1/1.</text>
</comment>
<comment type="pathway">
    <text evidence="1">Bacterial outer membrane biogenesis; LPS lipid A biosynthesis.</text>
</comment>
<comment type="subunit">
    <text evidence="1">Homotrimer.</text>
</comment>
<comment type="subcellular location">
    <subcellularLocation>
        <location evidence="1">Cytoplasm</location>
    </subcellularLocation>
</comment>
<comment type="similarity">
    <text evidence="1">In the N-terminal section; belongs to the N-acetylglucosamine-1-phosphate uridyltransferase family.</text>
</comment>
<comment type="similarity">
    <text evidence="1">In the C-terminal section; belongs to the transferase hexapeptide repeat family.</text>
</comment>
<reference key="1">
    <citation type="journal article" date="1989" name="Mol. Gen. Genet.">
        <title>Primary structure of the tms and prs genes of Bacillus subtilis.</title>
        <authorList>
            <person name="Nilsson D."/>
            <person name="Hove-Jensen B."/>
            <person name="Arnvig K."/>
        </authorList>
    </citation>
    <scope>NUCLEOTIDE SEQUENCE [GENOMIC DNA]</scope>
</reference>
<reference key="2">
    <citation type="journal article" date="1994" name="DNA Res.">
        <title>Systematic sequencing of the 180 kilobase region of the Bacillus subtilis chromosome containing the replication origin.</title>
        <authorList>
            <person name="Ogasawara N."/>
            <person name="Nakai S."/>
            <person name="Yoshikawa H."/>
        </authorList>
    </citation>
    <scope>NUCLEOTIDE SEQUENCE [GENOMIC DNA]</scope>
    <source>
        <strain>168</strain>
    </source>
</reference>
<reference key="3">
    <citation type="journal article" date="1997" name="Nature">
        <title>The complete genome sequence of the Gram-positive bacterium Bacillus subtilis.</title>
        <authorList>
            <person name="Kunst F."/>
            <person name="Ogasawara N."/>
            <person name="Moszer I."/>
            <person name="Albertini A.M."/>
            <person name="Alloni G."/>
            <person name="Azevedo V."/>
            <person name="Bertero M.G."/>
            <person name="Bessieres P."/>
            <person name="Bolotin A."/>
            <person name="Borchert S."/>
            <person name="Borriss R."/>
            <person name="Boursier L."/>
            <person name="Brans A."/>
            <person name="Braun M."/>
            <person name="Brignell S.C."/>
            <person name="Bron S."/>
            <person name="Brouillet S."/>
            <person name="Bruschi C.V."/>
            <person name="Caldwell B."/>
            <person name="Capuano V."/>
            <person name="Carter N.M."/>
            <person name="Choi S.-K."/>
            <person name="Codani J.-J."/>
            <person name="Connerton I.F."/>
            <person name="Cummings N.J."/>
            <person name="Daniel R.A."/>
            <person name="Denizot F."/>
            <person name="Devine K.M."/>
            <person name="Duesterhoeft A."/>
            <person name="Ehrlich S.D."/>
            <person name="Emmerson P.T."/>
            <person name="Entian K.-D."/>
            <person name="Errington J."/>
            <person name="Fabret C."/>
            <person name="Ferrari E."/>
            <person name="Foulger D."/>
            <person name="Fritz C."/>
            <person name="Fujita M."/>
            <person name="Fujita Y."/>
            <person name="Fuma S."/>
            <person name="Galizzi A."/>
            <person name="Galleron N."/>
            <person name="Ghim S.-Y."/>
            <person name="Glaser P."/>
            <person name="Goffeau A."/>
            <person name="Golightly E.J."/>
            <person name="Grandi G."/>
            <person name="Guiseppi G."/>
            <person name="Guy B.J."/>
            <person name="Haga K."/>
            <person name="Haiech J."/>
            <person name="Harwood C.R."/>
            <person name="Henaut A."/>
            <person name="Hilbert H."/>
            <person name="Holsappel S."/>
            <person name="Hosono S."/>
            <person name="Hullo M.-F."/>
            <person name="Itaya M."/>
            <person name="Jones L.-M."/>
            <person name="Joris B."/>
            <person name="Karamata D."/>
            <person name="Kasahara Y."/>
            <person name="Klaerr-Blanchard M."/>
            <person name="Klein C."/>
            <person name="Kobayashi Y."/>
            <person name="Koetter P."/>
            <person name="Koningstein G."/>
            <person name="Krogh S."/>
            <person name="Kumano M."/>
            <person name="Kurita K."/>
            <person name="Lapidus A."/>
            <person name="Lardinois S."/>
            <person name="Lauber J."/>
            <person name="Lazarevic V."/>
            <person name="Lee S.-M."/>
            <person name="Levine A."/>
            <person name="Liu H."/>
            <person name="Masuda S."/>
            <person name="Mauel C."/>
            <person name="Medigue C."/>
            <person name="Medina N."/>
            <person name="Mellado R.P."/>
            <person name="Mizuno M."/>
            <person name="Moestl D."/>
            <person name="Nakai S."/>
            <person name="Noback M."/>
            <person name="Noone D."/>
            <person name="O'Reilly M."/>
            <person name="Ogawa K."/>
            <person name="Ogiwara A."/>
            <person name="Oudega B."/>
            <person name="Park S.-H."/>
            <person name="Parro V."/>
            <person name="Pohl T.M."/>
            <person name="Portetelle D."/>
            <person name="Porwollik S."/>
            <person name="Prescott A.M."/>
            <person name="Presecan E."/>
            <person name="Pujic P."/>
            <person name="Purnelle B."/>
            <person name="Rapoport G."/>
            <person name="Rey M."/>
            <person name="Reynolds S."/>
            <person name="Rieger M."/>
            <person name="Rivolta C."/>
            <person name="Rocha E."/>
            <person name="Roche B."/>
            <person name="Rose M."/>
            <person name="Sadaie Y."/>
            <person name="Sato T."/>
            <person name="Scanlan E."/>
            <person name="Schleich S."/>
            <person name="Schroeter R."/>
            <person name="Scoffone F."/>
            <person name="Sekiguchi J."/>
            <person name="Sekowska A."/>
            <person name="Seror S.J."/>
            <person name="Serror P."/>
            <person name="Shin B.-S."/>
            <person name="Soldo B."/>
            <person name="Sorokin A."/>
            <person name="Tacconi E."/>
            <person name="Takagi T."/>
            <person name="Takahashi H."/>
            <person name="Takemaru K."/>
            <person name="Takeuchi M."/>
            <person name="Tamakoshi A."/>
            <person name="Tanaka T."/>
            <person name="Terpstra P."/>
            <person name="Tognoni A."/>
            <person name="Tosato V."/>
            <person name="Uchiyama S."/>
            <person name="Vandenbol M."/>
            <person name="Vannier F."/>
            <person name="Vassarotti A."/>
            <person name="Viari A."/>
            <person name="Wambutt R."/>
            <person name="Wedler E."/>
            <person name="Wedler H."/>
            <person name="Weitzenegger T."/>
            <person name="Winters P."/>
            <person name="Wipat A."/>
            <person name="Yamamoto H."/>
            <person name="Yamane K."/>
            <person name="Yasumoto K."/>
            <person name="Yata K."/>
            <person name="Yoshida K."/>
            <person name="Yoshikawa H.-F."/>
            <person name="Zumstein E."/>
            <person name="Yoshikawa H."/>
            <person name="Danchin A."/>
        </authorList>
    </citation>
    <scope>NUCLEOTIDE SEQUENCE [LARGE SCALE GENOMIC DNA]</scope>
    <source>
        <strain>168</strain>
    </source>
</reference>
<reference key="4">
    <citation type="journal article" date="1982" name="Mol. Gen. Genet.">
        <title>Nucleotide sequences that signal the initiation of transcription and translation in Bacillus subtilis.</title>
        <authorList>
            <person name="Moran C.P. Jr."/>
            <person name="Lang N."/>
            <person name="LeGrice S.F.J."/>
            <person name="Lee G."/>
            <person name="Stephens M."/>
            <person name="Sonenshein A.L."/>
            <person name="Pero J."/>
            <person name="Losick R."/>
        </authorList>
    </citation>
    <scope>NUCLEOTIDE SEQUENCE [GENOMIC DNA] OF 1-21</scope>
    <source>
        <strain>168</strain>
    </source>
</reference>
<reference key="5">
    <citation type="journal article" date="1992" name="Biochim. Biophys. Acta">
        <title>spoVG sequence of Bacillus megaterium and Bacillus subtilis.</title>
        <authorList>
            <person name="Hudspeth D.S.S."/>
            <person name="Vary P.S."/>
        </authorList>
    </citation>
    <scope>NUCLEOTIDE SEQUENCE [GENOMIC DNA] OF 1-21</scope>
    <source>
        <strain>168</strain>
    </source>
</reference>
<feature type="chain" id="PRO_0000068706" description="Bifunctional protein GlmU">
    <location>
        <begin position="1"/>
        <end position="456"/>
    </location>
</feature>
<feature type="region of interest" description="Pyrophosphorylase" evidence="1">
    <location>
        <begin position="1"/>
        <end position="230"/>
    </location>
</feature>
<feature type="region of interest" description="Linker" evidence="1">
    <location>
        <begin position="231"/>
        <end position="251"/>
    </location>
</feature>
<feature type="region of interest" description="N-acetyltransferase" evidence="1">
    <location>
        <begin position="252"/>
        <end position="456"/>
    </location>
</feature>
<feature type="active site" description="Proton acceptor" evidence="1">
    <location>
        <position position="363"/>
    </location>
</feature>
<feature type="binding site" evidence="1">
    <location>
        <begin position="9"/>
        <end position="12"/>
    </location>
    <ligand>
        <name>UDP-N-acetyl-alpha-D-glucosamine</name>
        <dbReference type="ChEBI" id="CHEBI:57705"/>
    </ligand>
</feature>
<feature type="binding site" evidence="1">
    <location>
        <position position="23"/>
    </location>
    <ligand>
        <name>UDP-N-acetyl-alpha-D-glucosamine</name>
        <dbReference type="ChEBI" id="CHEBI:57705"/>
    </ligand>
</feature>
<feature type="binding site" evidence="1">
    <location>
        <position position="73"/>
    </location>
    <ligand>
        <name>UDP-N-acetyl-alpha-D-glucosamine</name>
        <dbReference type="ChEBI" id="CHEBI:57705"/>
    </ligand>
</feature>
<feature type="binding site" evidence="1">
    <location>
        <begin position="78"/>
        <end position="79"/>
    </location>
    <ligand>
        <name>UDP-N-acetyl-alpha-D-glucosamine</name>
        <dbReference type="ChEBI" id="CHEBI:57705"/>
    </ligand>
</feature>
<feature type="binding site" evidence="1">
    <location>
        <position position="103"/>
    </location>
    <ligand>
        <name>Mg(2+)</name>
        <dbReference type="ChEBI" id="CHEBI:18420"/>
    </ligand>
</feature>
<feature type="binding site" evidence="1">
    <location>
        <position position="140"/>
    </location>
    <ligand>
        <name>UDP-N-acetyl-alpha-D-glucosamine</name>
        <dbReference type="ChEBI" id="CHEBI:57705"/>
    </ligand>
</feature>
<feature type="binding site" evidence="1">
    <location>
        <position position="155"/>
    </location>
    <ligand>
        <name>UDP-N-acetyl-alpha-D-glucosamine</name>
        <dbReference type="ChEBI" id="CHEBI:57705"/>
    </ligand>
</feature>
<feature type="binding site" evidence="1">
    <location>
        <position position="170"/>
    </location>
    <ligand>
        <name>UDP-N-acetyl-alpha-D-glucosamine</name>
        <dbReference type="ChEBI" id="CHEBI:57705"/>
    </ligand>
</feature>
<feature type="binding site" evidence="1">
    <location>
        <position position="228"/>
    </location>
    <ligand>
        <name>Mg(2+)</name>
        <dbReference type="ChEBI" id="CHEBI:18420"/>
    </ligand>
</feature>
<feature type="binding site" evidence="1">
    <location>
        <position position="228"/>
    </location>
    <ligand>
        <name>UDP-N-acetyl-alpha-D-glucosamine</name>
        <dbReference type="ChEBI" id="CHEBI:57705"/>
    </ligand>
</feature>
<feature type="binding site" evidence="1">
    <location>
        <position position="333"/>
    </location>
    <ligand>
        <name>UDP-N-acetyl-alpha-D-glucosamine</name>
        <dbReference type="ChEBI" id="CHEBI:57705"/>
    </ligand>
</feature>
<feature type="binding site" evidence="1">
    <location>
        <position position="351"/>
    </location>
    <ligand>
        <name>UDP-N-acetyl-alpha-D-glucosamine</name>
        <dbReference type="ChEBI" id="CHEBI:57705"/>
    </ligand>
</feature>
<feature type="binding site" evidence="1">
    <location>
        <position position="366"/>
    </location>
    <ligand>
        <name>UDP-N-acetyl-alpha-D-glucosamine</name>
        <dbReference type="ChEBI" id="CHEBI:57705"/>
    </ligand>
</feature>
<feature type="binding site" evidence="1">
    <location>
        <position position="377"/>
    </location>
    <ligand>
        <name>UDP-N-acetyl-alpha-D-glucosamine</name>
        <dbReference type="ChEBI" id="CHEBI:57705"/>
    </ligand>
</feature>
<feature type="binding site" evidence="1">
    <location>
        <begin position="386"/>
        <end position="387"/>
    </location>
    <ligand>
        <name>acetyl-CoA</name>
        <dbReference type="ChEBI" id="CHEBI:57288"/>
    </ligand>
</feature>
<feature type="binding site" evidence="1">
    <location>
        <position position="423"/>
    </location>
    <ligand>
        <name>acetyl-CoA</name>
        <dbReference type="ChEBI" id="CHEBI:57288"/>
    </ligand>
</feature>
<feature type="binding site" evidence="1">
    <location>
        <position position="440"/>
    </location>
    <ligand>
        <name>acetyl-CoA</name>
        <dbReference type="ChEBI" id="CHEBI:57288"/>
    </ligand>
</feature>
<feature type="sequence conflict" description="In Ref. 4." evidence="2" ref="4">
    <original>S</original>
    <variation>L</variation>
    <location>
        <position position="19"/>
    </location>
</feature>
<feature type="sequence conflict" description="In Ref. 2; BAA05285/CAB11826." evidence="2" ref="2">
    <original>RV</original>
    <variation>AL</variation>
    <location>
        <begin position="71"/>
        <end position="72"/>
    </location>
</feature>
<feature type="sequence conflict" description="In Ref. 2; BAA05285/CAB11826." evidence="2" ref="2">
    <original>R</original>
    <variation>A</variation>
    <location>
        <position position="126"/>
    </location>
</feature>
<protein>
    <recommendedName>
        <fullName evidence="1">Bifunctional protein GlmU</fullName>
    </recommendedName>
    <domain>
        <recommendedName>
            <fullName evidence="1">UDP-N-acetylglucosamine pyrophosphorylase</fullName>
            <ecNumber evidence="1">2.7.7.23</ecNumber>
        </recommendedName>
        <alternativeName>
            <fullName evidence="1">N-acetylglucosamine-1-phosphate uridyltransferase</fullName>
        </alternativeName>
    </domain>
    <domain>
        <recommendedName>
            <fullName evidence="1">Glucosamine-1-phosphate N-acetyltransferase</fullName>
            <ecNumber evidence="1">2.3.1.157</ecNumber>
        </recommendedName>
    </domain>
</protein>
<accession>P14192</accession>
<accession>Q45684</accession>
<dbReference type="EC" id="2.7.7.23" evidence="1"/>
<dbReference type="EC" id="2.3.1.157" evidence="1"/>
<dbReference type="EMBL" id="X16518">
    <property type="protein sequence ID" value="CAA34522.1"/>
    <property type="molecule type" value="Genomic_DNA"/>
</dbReference>
<dbReference type="EMBL" id="D26185">
    <property type="protein sequence ID" value="BAA05285.1"/>
    <property type="molecule type" value="Genomic_DNA"/>
</dbReference>
<dbReference type="EMBL" id="AL009126">
    <property type="protein sequence ID" value="CAB11826.1"/>
    <property type="molecule type" value="Genomic_DNA"/>
</dbReference>
<dbReference type="EMBL" id="J01550">
    <property type="protein sequence ID" value="AAA22854.1"/>
    <property type="molecule type" value="Genomic_DNA"/>
</dbReference>
<dbReference type="EMBL" id="X62378">
    <property type="protein sequence ID" value="CAA44243.1"/>
    <property type="molecule type" value="Genomic_DNA"/>
</dbReference>
<dbReference type="PIR" id="S66080">
    <property type="entry name" value="S66080"/>
</dbReference>
<dbReference type="RefSeq" id="NP_387931.1">
    <property type="nucleotide sequence ID" value="NC_000964.3"/>
</dbReference>
<dbReference type="RefSeq" id="WP_003226732.1">
    <property type="nucleotide sequence ID" value="NZ_OZ025638.1"/>
</dbReference>
<dbReference type="SMR" id="P14192"/>
<dbReference type="FunCoup" id="P14192">
    <property type="interactions" value="458"/>
</dbReference>
<dbReference type="STRING" id="224308.BSU00500"/>
<dbReference type="jPOST" id="P14192"/>
<dbReference type="PaxDb" id="224308-BSU00500"/>
<dbReference type="EnsemblBacteria" id="CAB11826">
    <property type="protein sequence ID" value="CAB11826"/>
    <property type="gene ID" value="BSU_00500"/>
</dbReference>
<dbReference type="GeneID" id="936139"/>
<dbReference type="KEGG" id="bsu:BSU00500"/>
<dbReference type="PATRIC" id="fig|224308.43.peg.51"/>
<dbReference type="eggNOG" id="COG1207">
    <property type="taxonomic scope" value="Bacteria"/>
</dbReference>
<dbReference type="InParanoid" id="P14192"/>
<dbReference type="OrthoDB" id="9775031at2"/>
<dbReference type="BioCyc" id="BSUB:BSU00500-MONOMER"/>
<dbReference type="BRENDA" id="2.3.1.157">
    <property type="organism ID" value="658"/>
</dbReference>
<dbReference type="UniPathway" id="UPA00113">
    <property type="reaction ID" value="UER00532"/>
</dbReference>
<dbReference type="UniPathway" id="UPA00113">
    <property type="reaction ID" value="UER00533"/>
</dbReference>
<dbReference type="UniPathway" id="UPA00973"/>
<dbReference type="Proteomes" id="UP000001570">
    <property type="component" value="Chromosome"/>
</dbReference>
<dbReference type="GO" id="GO:0005737">
    <property type="term" value="C:cytoplasm"/>
    <property type="evidence" value="ECO:0007669"/>
    <property type="project" value="UniProtKB-SubCell"/>
</dbReference>
<dbReference type="GO" id="GO:0016020">
    <property type="term" value="C:membrane"/>
    <property type="evidence" value="ECO:0007669"/>
    <property type="project" value="GOC"/>
</dbReference>
<dbReference type="GO" id="GO:0019134">
    <property type="term" value="F:glucosamine-1-phosphate N-acetyltransferase activity"/>
    <property type="evidence" value="ECO:0007669"/>
    <property type="project" value="UniProtKB-UniRule"/>
</dbReference>
<dbReference type="GO" id="GO:0000287">
    <property type="term" value="F:magnesium ion binding"/>
    <property type="evidence" value="ECO:0007669"/>
    <property type="project" value="UniProtKB-UniRule"/>
</dbReference>
<dbReference type="GO" id="GO:0003977">
    <property type="term" value="F:UDP-N-acetylglucosamine diphosphorylase activity"/>
    <property type="evidence" value="ECO:0007669"/>
    <property type="project" value="UniProtKB-UniRule"/>
</dbReference>
<dbReference type="GO" id="GO:0000902">
    <property type="term" value="P:cell morphogenesis"/>
    <property type="evidence" value="ECO:0007669"/>
    <property type="project" value="UniProtKB-UniRule"/>
</dbReference>
<dbReference type="GO" id="GO:0071555">
    <property type="term" value="P:cell wall organization"/>
    <property type="evidence" value="ECO:0007669"/>
    <property type="project" value="UniProtKB-KW"/>
</dbReference>
<dbReference type="GO" id="GO:0009245">
    <property type="term" value="P:lipid A biosynthetic process"/>
    <property type="evidence" value="ECO:0007669"/>
    <property type="project" value="UniProtKB-UniRule"/>
</dbReference>
<dbReference type="GO" id="GO:0009252">
    <property type="term" value="P:peptidoglycan biosynthetic process"/>
    <property type="evidence" value="ECO:0007669"/>
    <property type="project" value="UniProtKB-UniRule"/>
</dbReference>
<dbReference type="GO" id="GO:0008360">
    <property type="term" value="P:regulation of cell shape"/>
    <property type="evidence" value="ECO:0007669"/>
    <property type="project" value="UniProtKB-KW"/>
</dbReference>
<dbReference type="GO" id="GO:0006048">
    <property type="term" value="P:UDP-N-acetylglucosamine biosynthetic process"/>
    <property type="evidence" value="ECO:0007669"/>
    <property type="project" value="UniProtKB-UniPathway"/>
</dbReference>
<dbReference type="CDD" id="cd02540">
    <property type="entry name" value="GT2_GlmU_N_bac"/>
    <property type="match status" value="1"/>
</dbReference>
<dbReference type="CDD" id="cd03353">
    <property type="entry name" value="LbH_GlmU_C"/>
    <property type="match status" value="1"/>
</dbReference>
<dbReference type="Gene3D" id="2.160.10.10">
    <property type="entry name" value="Hexapeptide repeat proteins"/>
    <property type="match status" value="1"/>
</dbReference>
<dbReference type="Gene3D" id="3.90.550.10">
    <property type="entry name" value="Spore Coat Polysaccharide Biosynthesis Protein SpsA, Chain A"/>
    <property type="match status" value="1"/>
</dbReference>
<dbReference type="HAMAP" id="MF_01631">
    <property type="entry name" value="GlmU"/>
    <property type="match status" value="1"/>
</dbReference>
<dbReference type="InterPro" id="IPR005882">
    <property type="entry name" value="Bifunctional_GlmU"/>
</dbReference>
<dbReference type="InterPro" id="IPR050065">
    <property type="entry name" value="GlmU-like"/>
</dbReference>
<dbReference type="InterPro" id="IPR038009">
    <property type="entry name" value="GlmU_C_LbH"/>
</dbReference>
<dbReference type="InterPro" id="IPR001451">
    <property type="entry name" value="Hexapep"/>
</dbReference>
<dbReference type="InterPro" id="IPR018357">
    <property type="entry name" value="Hexapep_transf_CS"/>
</dbReference>
<dbReference type="InterPro" id="IPR005835">
    <property type="entry name" value="NTP_transferase_dom"/>
</dbReference>
<dbReference type="InterPro" id="IPR029044">
    <property type="entry name" value="Nucleotide-diphossugar_trans"/>
</dbReference>
<dbReference type="InterPro" id="IPR011004">
    <property type="entry name" value="Trimer_LpxA-like_sf"/>
</dbReference>
<dbReference type="NCBIfam" id="TIGR01173">
    <property type="entry name" value="glmU"/>
    <property type="match status" value="1"/>
</dbReference>
<dbReference type="NCBIfam" id="NF010934">
    <property type="entry name" value="PRK14354.1"/>
    <property type="match status" value="1"/>
</dbReference>
<dbReference type="PANTHER" id="PTHR43584:SF3">
    <property type="entry name" value="BIFUNCTIONAL PROTEIN GLMU"/>
    <property type="match status" value="1"/>
</dbReference>
<dbReference type="PANTHER" id="PTHR43584">
    <property type="entry name" value="NUCLEOTIDYL TRANSFERASE"/>
    <property type="match status" value="1"/>
</dbReference>
<dbReference type="Pfam" id="PF00132">
    <property type="entry name" value="Hexapep"/>
    <property type="match status" value="3"/>
</dbReference>
<dbReference type="Pfam" id="PF00483">
    <property type="entry name" value="NTP_transferase"/>
    <property type="match status" value="1"/>
</dbReference>
<dbReference type="SUPFAM" id="SSF53448">
    <property type="entry name" value="Nucleotide-diphospho-sugar transferases"/>
    <property type="match status" value="1"/>
</dbReference>
<dbReference type="SUPFAM" id="SSF51161">
    <property type="entry name" value="Trimeric LpxA-like enzymes"/>
    <property type="match status" value="1"/>
</dbReference>
<dbReference type="PROSITE" id="PS00101">
    <property type="entry name" value="HEXAPEP_TRANSFERASES"/>
    <property type="match status" value="1"/>
</dbReference>
<name>GLMU_BACSU</name>
<evidence type="ECO:0000255" key="1">
    <source>
        <dbReference type="HAMAP-Rule" id="MF_01631"/>
    </source>
</evidence>
<evidence type="ECO:0000305" key="2"/>
<keyword id="KW-0012">Acyltransferase</keyword>
<keyword id="KW-0133">Cell shape</keyword>
<keyword id="KW-0961">Cell wall biogenesis/degradation</keyword>
<keyword id="KW-0963">Cytoplasm</keyword>
<keyword id="KW-0460">Magnesium</keyword>
<keyword id="KW-0479">Metal-binding</keyword>
<keyword id="KW-0511">Multifunctional enzyme</keyword>
<keyword id="KW-0548">Nucleotidyltransferase</keyword>
<keyword id="KW-0573">Peptidoglycan synthesis</keyword>
<keyword id="KW-1185">Reference proteome</keyword>
<keyword id="KW-0677">Repeat</keyword>
<keyword id="KW-0808">Transferase</keyword>
<sequence>MDKRFAVVLAAGQGTRMKSKLYKVLHPVCGKPMVEHVVDEALKLSLSKLVTIVGHGAEEVKKQLGDKSEYRVQAKQLGTAHAVKQAQPFLADEKGVTIVICGDTPLLTAETMEQMLKEHTQREAKRTILTAVAEDPTGYGRIIRSENGAVQKIVEHKDASEEERLVTEINTGTYCFDNEALFRAIDQVSNDNAQGEYYLPDVIEILKNEGETVAAYQTGNFQETLGVNDRVALSQAEQFMKERINKRHMQNGVTLIDPMNTYISPDAVIGSDTVIYPGTVIKGEVQIGEDTIIGPHTEIMNSAIGSRTVIKQSVVNHSKVGNDVNIGPFAHIRPDSVIGNEVKIGNFVEIKKTQFGDRSKASHLSYVGDAEVGTDVNLGCGSITVNYDGKNKYLTKIEDGAFIGCNSNLVAPVTVGEGAYVAAGSTVTEDVPGKALAIARARQVNKDDYVKNIHKK</sequence>